<name>HEM1_HELPG</name>
<protein>
    <recommendedName>
        <fullName evidence="1">Glutamyl-tRNA reductase</fullName>
        <shortName evidence="1">GluTR</shortName>
        <ecNumber evidence="1">1.2.1.70</ecNumber>
    </recommendedName>
</protein>
<keyword id="KW-0521">NADP</keyword>
<keyword id="KW-0560">Oxidoreductase</keyword>
<keyword id="KW-0627">Porphyrin biosynthesis</keyword>
<keyword id="KW-1185">Reference proteome</keyword>
<dbReference type="EC" id="1.2.1.70" evidence="1"/>
<dbReference type="EMBL" id="CP001173">
    <property type="protein sequence ID" value="ACI26986.1"/>
    <property type="molecule type" value="Genomic_DNA"/>
</dbReference>
<dbReference type="RefSeq" id="WP_000418382.1">
    <property type="nucleotide sequence ID" value="NC_011333.1"/>
</dbReference>
<dbReference type="SMR" id="B5ZA06"/>
<dbReference type="KEGG" id="hpg:HPG27_219"/>
<dbReference type="HOGENOM" id="CLU_035113_2_2_7"/>
<dbReference type="UniPathway" id="UPA00251">
    <property type="reaction ID" value="UER00316"/>
</dbReference>
<dbReference type="Proteomes" id="UP000001735">
    <property type="component" value="Chromosome"/>
</dbReference>
<dbReference type="GO" id="GO:0008883">
    <property type="term" value="F:glutamyl-tRNA reductase activity"/>
    <property type="evidence" value="ECO:0007669"/>
    <property type="project" value="UniProtKB-UniRule"/>
</dbReference>
<dbReference type="GO" id="GO:0050661">
    <property type="term" value="F:NADP binding"/>
    <property type="evidence" value="ECO:0007669"/>
    <property type="project" value="InterPro"/>
</dbReference>
<dbReference type="GO" id="GO:0006782">
    <property type="term" value="P:protoporphyrinogen IX biosynthetic process"/>
    <property type="evidence" value="ECO:0007669"/>
    <property type="project" value="UniProtKB-UniRule"/>
</dbReference>
<dbReference type="CDD" id="cd05213">
    <property type="entry name" value="NAD_bind_Glutamyl_tRNA_reduct"/>
    <property type="match status" value="1"/>
</dbReference>
<dbReference type="FunFam" id="3.30.460.30:FF:000001">
    <property type="entry name" value="Glutamyl-tRNA reductase"/>
    <property type="match status" value="1"/>
</dbReference>
<dbReference type="Gene3D" id="3.30.460.30">
    <property type="entry name" value="Glutamyl-tRNA reductase, N-terminal domain"/>
    <property type="match status" value="1"/>
</dbReference>
<dbReference type="Gene3D" id="3.40.50.720">
    <property type="entry name" value="NAD(P)-binding Rossmann-like Domain"/>
    <property type="match status" value="1"/>
</dbReference>
<dbReference type="HAMAP" id="MF_00087">
    <property type="entry name" value="Glu_tRNA_reductase"/>
    <property type="match status" value="1"/>
</dbReference>
<dbReference type="InterPro" id="IPR000343">
    <property type="entry name" value="4pyrrol_synth_GluRdtase"/>
</dbReference>
<dbReference type="InterPro" id="IPR015896">
    <property type="entry name" value="4pyrrol_synth_GluRdtase_dimer"/>
</dbReference>
<dbReference type="InterPro" id="IPR015895">
    <property type="entry name" value="4pyrrol_synth_GluRdtase_N"/>
</dbReference>
<dbReference type="InterPro" id="IPR018214">
    <property type="entry name" value="GluRdtase_CS"/>
</dbReference>
<dbReference type="InterPro" id="IPR036453">
    <property type="entry name" value="GluRdtase_dimer_dom_sf"/>
</dbReference>
<dbReference type="InterPro" id="IPR036343">
    <property type="entry name" value="GluRdtase_N_sf"/>
</dbReference>
<dbReference type="InterPro" id="IPR036291">
    <property type="entry name" value="NAD(P)-bd_dom_sf"/>
</dbReference>
<dbReference type="InterPro" id="IPR006151">
    <property type="entry name" value="Shikm_DH/Glu-tRNA_Rdtase"/>
</dbReference>
<dbReference type="NCBIfam" id="TIGR01035">
    <property type="entry name" value="hemA"/>
    <property type="match status" value="1"/>
</dbReference>
<dbReference type="PANTHER" id="PTHR43120">
    <property type="entry name" value="GLUTAMYL-TRNA REDUCTASE 1, CHLOROPLASTIC"/>
    <property type="match status" value="1"/>
</dbReference>
<dbReference type="PANTHER" id="PTHR43120:SF1">
    <property type="entry name" value="GLUTAMYL-TRNA REDUCTASE 1, CHLOROPLASTIC"/>
    <property type="match status" value="1"/>
</dbReference>
<dbReference type="Pfam" id="PF00745">
    <property type="entry name" value="GlutR_dimer"/>
    <property type="match status" value="1"/>
</dbReference>
<dbReference type="Pfam" id="PF05201">
    <property type="entry name" value="GlutR_N"/>
    <property type="match status" value="1"/>
</dbReference>
<dbReference type="Pfam" id="PF01488">
    <property type="entry name" value="Shikimate_DH"/>
    <property type="match status" value="1"/>
</dbReference>
<dbReference type="PIRSF" id="PIRSF000445">
    <property type="entry name" value="4pyrrol_synth_GluRdtase"/>
    <property type="match status" value="1"/>
</dbReference>
<dbReference type="SUPFAM" id="SSF69742">
    <property type="entry name" value="Glutamyl tRNA-reductase catalytic, N-terminal domain"/>
    <property type="match status" value="1"/>
</dbReference>
<dbReference type="SUPFAM" id="SSF69075">
    <property type="entry name" value="Glutamyl tRNA-reductase dimerization domain"/>
    <property type="match status" value="1"/>
</dbReference>
<dbReference type="SUPFAM" id="SSF51735">
    <property type="entry name" value="NAD(P)-binding Rossmann-fold domains"/>
    <property type="match status" value="1"/>
</dbReference>
<dbReference type="PROSITE" id="PS00747">
    <property type="entry name" value="GLUTR"/>
    <property type="match status" value="1"/>
</dbReference>
<evidence type="ECO:0000255" key="1">
    <source>
        <dbReference type="HAMAP-Rule" id="MF_00087"/>
    </source>
</evidence>
<organism>
    <name type="scientific">Helicobacter pylori (strain G27)</name>
    <dbReference type="NCBI Taxonomy" id="563041"/>
    <lineage>
        <taxon>Bacteria</taxon>
        <taxon>Pseudomonadati</taxon>
        <taxon>Campylobacterota</taxon>
        <taxon>Epsilonproteobacteria</taxon>
        <taxon>Campylobacterales</taxon>
        <taxon>Helicobacteraceae</taxon>
        <taxon>Helicobacter</taxon>
    </lineage>
</organism>
<gene>
    <name evidence="1" type="primary">hemA</name>
    <name type="ordered locus">HPG27_219</name>
</gene>
<reference key="1">
    <citation type="journal article" date="2009" name="J. Bacteriol.">
        <title>The complete genome sequence of Helicobacter pylori strain G27.</title>
        <authorList>
            <person name="Baltrus D.A."/>
            <person name="Amieva M.R."/>
            <person name="Covacci A."/>
            <person name="Lowe T.M."/>
            <person name="Merrell D.S."/>
            <person name="Ottemann K.M."/>
            <person name="Stein M."/>
            <person name="Salama N.R."/>
            <person name="Guillemin K."/>
        </authorList>
    </citation>
    <scope>NUCLEOTIDE SEQUENCE [LARGE SCALE GENOMIC DNA]</scope>
    <source>
        <strain>G27</strain>
    </source>
</reference>
<feature type="chain" id="PRO_1000093144" description="Glutamyl-tRNA reductase">
    <location>
        <begin position="1"/>
        <end position="449"/>
    </location>
</feature>
<feature type="active site" description="Nucleophile" evidence="1">
    <location>
        <position position="59"/>
    </location>
</feature>
<feature type="binding site" evidence="1">
    <location>
        <begin position="58"/>
        <end position="61"/>
    </location>
    <ligand>
        <name>substrate</name>
    </ligand>
</feature>
<feature type="binding site" evidence="1">
    <location>
        <position position="121"/>
    </location>
    <ligand>
        <name>substrate</name>
    </ligand>
</feature>
<feature type="binding site" evidence="1">
    <location>
        <begin position="126"/>
        <end position="128"/>
    </location>
    <ligand>
        <name>substrate</name>
    </ligand>
</feature>
<feature type="binding site" evidence="1">
    <location>
        <position position="132"/>
    </location>
    <ligand>
        <name>substrate</name>
    </ligand>
</feature>
<feature type="binding site" evidence="1">
    <location>
        <begin position="203"/>
        <end position="208"/>
    </location>
    <ligand>
        <name>NADP(+)</name>
        <dbReference type="ChEBI" id="CHEBI:58349"/>
    </ligand>
</feature>
<feature type="site" description="Important for activity" evidence="1">
    <location>
        <position position="111"/>
    </location>
</feature>
<sequence>MELETHLSKYFTLAFTHKSMSLEMREKLAINSSATLKEFLQTIKTHCPNIKECMVLSTCNRFEIYASLKHNTHANEQKNALLKILAQNKKMSMSDLEKCVLMNTDESAVHHVFSVCSSLDSLVVGETQITGQMKNAYRFAFEEKFCSKDLTRLLHFAFKCAAKVRNLTGISKQGVSISSVAVKEALNIFEKERIKDKKALVIGLGEMAQLVIKHLLNKQFEVLILGRNAAKFEDFIKELEEPKKVSFQNIENLNAYINAYALLFCATSSPHFIVQNRMLKETSFRRFWFDLAVPRNIEKPVFNNIFLYSVDDLEPMVRENVGNRQESRTRAYEIVGLATMEFYQWIQSLEVEPLIKDLRELARISAQKELQKALKKRYVPKEYEGNIEKILHNAFNTFLHHPTIALKKNAQKEESDVLVGAIKNLFNLDKSTTCHAQNLNLYKCEYYEE</sequence>
<accession>B5ZA06</accession>
<proteinExistence type="inferred from homology"/>
<comment type="function">
    <text evidence="1">Catalyzes the NADPH-dependent reduction of glutamyl-tRNA(Glu) to glutamate 1-semialdehyde (GSA).</text>
</comment>
<comment type="catalytic activity">
    <reaction evidence="1">
        <text>(S)-4-amino-5-oxopentanoate + tRNA(Glu) + NADP(+) = L-glutamyl-tRNA(Glu) + NADPH + H(+)</text>
        <dbReference type="Rhea" id="RHEA:12344"/>
        <dbReference type="Rhea" id="RHEA-COMP:9663"/>
        <dbReference type="Rhea" id="RHEA-COMP:9680"/>
        <dbReference type="ChEBI" id="CHEBI:15378"/>
        <dbReference type="ChEBI" id="CHEBI:57501"/>
        <dbReference type="ChEBI" id="CHEBI:57783"/>
        <dbReference type="ChEBI" id="CHEBI:58349"/>
        <dbReference type="ChEBI" id="CHEBI:78442"/>
        <dbReference type="ChEBI" id="CHEBI:78520"/>
        <dbReference type="EC" id="1.2.1.70"/>
    </reaction>
</comment>
<comment type="pathway">
    <text evidence="1">Porphyrin-containing compound metabolism; protoporphyrin-IX biosynthesis; 5-aminolevulinate from L-glutamyl-tRNA(Glu): step 1/2.</text>
</comment>
<comment type="subunit">
    <text evidence="1">Homodimer.</text>
</comment>
<comment type="domain">
    <text evidence="1">Possesses an unusual extended V-shaped dimeric structure with each monomer consisting of three distinct domains arranged along a curved 'spinal' alpha-helix. The N-terminal catalytic domain specifically recognizes the glutamate moiety of the substrate. The second domain is the NADPH-binding domain, and the third C-terminal domain is responsible for dimerization.</text>
</comment>
<comment type="miscellaneous">
    <text evidence="1">During catalysis, the active site Cys acts as a nucleophile attacking the alpha-carbonyl group of tRNA-bound glutamate with the formation of a thioester intermediate between enzyme and glutamate, and the concomitant release of tRNA(Glu). The thioester intermediate is finally reduced by direct hydride transfer from NADPH, to form the product GSA.</text>
</comment>
<comment type="similarity">
    <text evidence="1">Belongs to the glutamyl-tRNA reductase family.</text>
</comment>